<keyword id="KW-0120">Carbon dioxide fixation</keyword>
<keyword id="KW-0456">Lyase</keyword>
<keyword id="KW-0460">Magnesium</keyword>
<keyword id="KW-1185">Reference proteome</keyword>
<evidence type="ECO:0000255" key="1">
    <source>
        <dbReference type="HAMAP-Rule" id="MF_00595"/>
    </source>
</evidence>
<feature type="chain" id="PRO_0000166637" description="Phosphoenolpyruvate carboxylase">
    <location>
        <begin position="1"/>
        <end position="940"/>
    </location>
</feature>
<feature type="active site" evidence="1">
    <location>
        <position position="138"/>
    </location>
</feature>
<feature type="active site" evidence="1">
    <location>
        <position position="603"/>
    </location>
</feature>
<name>CAPP_STRT2</name>
<comment type="function">
    <text evidence="1">Forms oxaloacetate, a four-carbon dicarboxylic acid source for the tricarboxylic acid cycle.</text>
</comment>
<comment type="catalytic activity">
    <reaction evidence="1">
        <text>oxaloacetate + phosphate = phosphoenolpyruvate + hydrogencarbonate</text>
        <dbReference type="Rhea" id="RHEA:28370"/>
        <dbReference type="ChEBI" id="CHEBI:16452"/>
        <dbReference type="ChEBI" id="CHEBI:17544"/>
        <dbReference type="ChEBI" id="CHEBI:43474"/>
        <dbReference type="ChEBI" id="CHEBI:58702"/>
        <dbReference type="EC" id="4.1.1.31"/>
    </reaction>
</comment>
<comment type="cofactor">
    <cofactor evidence="1">
        <name>Mg(2+)</name>
        <dbReference type="ChEBI" id="CHEBI:18420"/>
    </cofactor>
</comment>
<comment type="similarity">
    <text evidence="1">Belongs to the PEPCase type 1 family.</text>
</comment>
<sequence>MAFNKLESSNNQEIISEEVGILKELLDDATRGMAGEQGLTTIQHLVELYDEGDYEALTQAISEMTNDDMVVASRYFSLLPLLINISEDVDLAYEVNRKNNIDESYLGKLSETFDVVAESDNARDILENVNVVPVLTAHPTQVQRKTMLELTNHIHELLRKHRDVKDGLINKDKWYADLRRYVEIMMKTDIIREKKLKVKNEITNVMEYYNSSLIKAITKLSHEFKRLAVEKGIELDNPTPITMGMWIGGDRDGNPFVTAETLKLSATLQSEVILNYYIEKVDNLYRSFSLSSRLTEVSETVAEMAKLSPDTSVYRENEPYRRAFSYIQSKLIQTLLFFKAGNFSKERAAKRLSENVRLGSVSTGEVVADFVHDRLSQSLQAVSQQTTEFYETAEAFHDDLLAIKNSLLENDDSVLISGDFEELLQAVEVFGFYLATIDMRQDSSVHEACVAELLKSANIVDNYSELTEVEKVAVLLKELQEDPRTLSSTNVSKSETLEKELAIFRTARLLKDYLGEEVIKQHIISHTESVSDMFELAILLKEVGLVDTERARVQIVPLFETIEDLENSNEIMKQYLGYDIVKRWIKNSNNYQEIMLGYSDSNKDGGYLSSGWTLYKAQNELTNIGEERGIKITFFHGRGGTVGRGGGPSYDAITSQPFGTIKDRIRLTEQGEVIGNKYGNKDAAYYNLEMLVSATLDRMVTRQITDPDELVDFREIMDSIVQDSNRIYRDLVFGNEHFYDYFFEASPIKEVSSLNIGSRPAARKTITDISGLRAIPWVFSWSQNRIMLPGWYGVGSAFNHYIEAEEGNLEKLQHMFETWPFFRSLLSNVDMVLSKSDMNIAFHYAQLAESEEVRSVFNIILDEWQLTKNVILAIEKHDDFLEESPSLKASLGFRLPYFNVLNYIQIELIKRLRNNNLTDDEISLIHITINGIATGLRNSG</sequence>
<organism>
    <name type="scientific">Streptococcus thermophilus (strain ATCC BAA-250 / LMG 18311)</name>
    <dbReference type="NCBI Taxonomy" id="264199"/>
    <lineage>
        <taxon>Bacteria</taxon>
        <taxon>Bacillati</taxon>
        <taxon>Bacillota</taxon>
        <taxon>Bacilli</taxon>
        <taxon>Lactobacillales</taxon>
        <taxon>Streptococcaceae</taxon>
        <taxon>Streptococcus</taxon>
    </lineage>
</organism>
<reference key="1">
    <citation type="journal article" date="2004" name="Nat. Biotechnol.">
        <title>Complete sequence and comparative genome analysis of the dairy bacterium Streptococcus thermophilus.</title>
        <authorList>
            <person name="Bolotin A."/>
            <person name="Quinquis B."/>
            <person name="Renault P."/>
            <person name="Sorokin A."/>
            <person name="Ehrlich S.D."/>
            <person name="Kulakauskas S."/>
            <person name="Lapidus A."/>
            <person name="Goltsman E."/>
            <person name="Mazur M."/>
            <person name="Pusch G.D."/>
            <person name="Fonstein M."/>
            <person name="Overbeek R."/>
            <person name="Kyprides N."/>
            <person name="Purnelle B."/>
            <person name="Prozzi D."/>
            <person name="Ngui K."/>
            <person name="Masuy D."/>
            <person name="Hancy F."/>
            <person name="Burteau S."/>
            <person name="Boutry M."/>
            <person name="Delcour J."/>
            <person name="Goffeau A."/>
            <person name="Hols P."/>
        </authorList>
    </citation>
    <scope>NUCLEOTIDE SEQUENCE [LARGE SCALE GENOMIC DNA]</scope>
    <source>
        <strain>ATCC BAA-250 / LMG 18311</strain>
    </source>
</reference>
<accession>Q5M4Z3</accession>
<protein>
    <recommendedName>
        <fullName evidence="1">Phosphoenolpyruvate carboxylase</fullName>
        <shortName evidence="1">PEPC</shortName>
        <shortName evidence="1">PEPCase</shortName>
        <ecNumber evidence="1">4.1.1.31</ecNumber>
    </recommendedName>
</protein>
<gene>
    <name evidence="1" type="primary">ppc</name>
    <name type="ordered locus">stu0718</name>
</gene>
<dbReference type="EC" id="4.1.1.31" evidence="1"/>
<dbReference type="EMBL" id="CP000023">
    <property type="protein sequence ID" value="AAV60411.1"/>
    <property type="molecule type" value="Genomic_DNA"/>
</dbReference>
<dbReference type="RefSeq" id="WP_011225765.1">
    <property type="nucleotide sequence ID" value="NC_006448.1"/>
</dbReference>
<dbReference type="SMR" id="Q5M4Z3"/>
<dbReference type="STRING" id="264199.stu0718"/>
<dbReference type="GeneID" id="66898618"/>
<dbReference type="KEGG" id="stl:stu0718"/>
<dbReference type="PATRIC" id="fig|264199.4.peg.726"/>
<dbReference type="eggNOG" id="COG2352">
    <property type="taxonomic scope" value="Bacteria"/>
</dbReference>
<dbReference type="HOGENOM" id="CLU_006557_2_0_9"/>
<dbReference type="Proteomes" id="UP000001170">
    <property type="component" value="Chromosome"/>
</dbReference>
<dbReference type="GO" id="GO:0005829">
    <property type="term" value="C:cytosol"/>
    <property type="evidence" value="ECO:0007669"/>
    <property type="project" value="TreeGrafter"/>
</dbReference>
<dbReference type="GO" id="GO:0000287">
    <property type="term" value="F:magnesium ion binding"/>
    <property type="evidence" value="ECO:0007669"/>
    <property type="project" value="UniProtKB-UniRule"/>
</dbReference>
<dbReference type="GO" id="GO:0008964">
    <property type="term" value="F:phosphoenolpyruvate carboxylase activity"/>
    <property type="evidence" value="ECO:0007669"/>
    <property type="project" value="UniProtKB-UniRule"/>
</dbReference>
<dbReference type="GO" id="GO:0015977">
    <property type="term" value="P:carbon fixation"/>
    <property type="evidence" value="ECO:0007669"/>
    <property type="project" value="UniProtKB-UniRule"/>
</dbReference>
<dbReference type="GO" id="GO:0006107">
    <property type="term" value="P:oxaloacetate metabolic process"/>
    <property type="evidence" value="ECO:0007669"/>
    <property type="project" value="UniProtKB-UniRule"/>
</dbReference>
<dbReference type="GO" id="GO:0006099">
    <property type="term" value="P:tricarboxylic acid cycle"/>
    <property type="evidence" value="ECO:0007669"/>
    <property type="project" value="InterPro"/>
</dbReference>
<dbReference type="Gene3D" id="1.20.1440.90">
    <property type="entry name" value="Phosphoenolpyruvate/pyruvate domain"/>
    <property type="match status" value="1"/>
</dbReference>
<dbReference type="HAMAP" id="MF_00595">
    <property type="entry name" value="PEPcase_type1"/>
    <property type="match status" value="1"/>
</dbReference>
<dbReference type="InterPro" id="IPR021135">
    <property type="entry name" value="PEP_COase"/>
</dbReference>
<dbReference type="InterPro" id="IPR022805">
    <property type="entry name" value="PEP_COase_bac/pln-type"/>
</dbReference>
<dbReference type="InterPro" id="IPR018129">
    <property type="entry name" value="PEP_COase_Lys_AS"/>
</dbReference>
<dbReference type="InterPro" id="IPR033129">
    <property type="entry name" value="PEPCASE_His_AS"/>
</dbReference>
<dbReference type="InterPro" id="IPR015813">
    <property type="entry name" value="Pyrv/PenolPyrv_kinase-like_dom"/>
</dbReference>
<dbReference type="NCBIfam" id="NF000584">
    <property type="entry name" value="PRK00009.1"/>
    <property type="match status" value="1"/>
</dbReference>
<dbReference type="PANTHER" id="PTHR30523">
    <property type="entry name" value="PHOSPHOENOLPYRUVATE CARBOXYLASE"/>
    <property type="match status" value="1"/>
</dbReference>
<dbReference type="PANTHER" id="PTHR30523:SF6">
    <property type="entry name" value="PHOSPHOENOLPYRUVATE CARBOXYLASE"/>
    <property type="match status" value="1"/>
</dbReference>
<dbReference type="Pfam" id="PF00311">
    <property type="entry name" value="PEPcase"/>
    <property type="match status" value="1"/>
</dbReference>
<dbReference type="PRINTS" id="PR00150">
    <property type="entry name" value="PEPCARBXLASE"/>
</dbReference>
<dbReference type="SUPFAM" id="SSF51621">
    <property type="entry name" value="Phosphoenolpyruvate/pyruvate domain"/>
    <property type="match status" value="1"/>
</dbReference>
<dbReference type="PROSITE" id="PS00781">
    <property type="entry name" value="PEPCASE_1"/>
    <property type="match status" value="1"/>
</dbReference>
<dbReference type="PROSITE" id="PS00393">
    <property type="entry name" value="PEPCASE_2"/>
    <property type="match status" value="1"/>
</dbReference>
<proteinExistence type="inferred from homology"/>